<sequence length="225" mass="25287">MKHLFKLDPAKNLPMNDLTKLVHSGTNGFIIGGTDNVQIEAVQKLYELLGETDLPIFLEISNESMILPEADHFLIPVVLNTENSKWTHGLHQELIKEMGAFIPWKRVTAEGYVILNKDAKVAHLTEAKTDLTDEDIVAYARLAENIFHLPIFYVEYSGMYGDPEVVRKASAALSNTKFWYGGGIRSKEQAAEMAKYADTIIVGNIIYEDLEKALETATIFRKKTV</sequence>
<organism>
    <name type="scientific">Listeria monocytogenes serotype 4b (strain F2365)</name>
    <dbReference type="NCBI Taxonomy" id="265669"/>
    <lineage>
        <taxon>Bacteria</taxon>
        <taxon>Bacillati</taxon>
        <taxon>Bacillota</taxon>
        <taxon>Bacilli</taxon>
        <taxon>Bacillales</taxon>
        <taxon>Listeriaceae</taxon>
        <taxon>Listeria</taxon>
    </lineage>
</organism>
<comment type="function">
    <text evidence="1">Prenyltransferase that catalyzes in vivo the transfer of the heptaprenyl moiety of heptaprenyl pyrophosphate (HepPP; 35 carbon atoms) to the C3 hydroxyl of sn-glycerol-1-phosphate (G1P), producing heptaprenylglyceryl phosphate (HepGP). This reaction is an ether-bond-formation step in the biosynthesis of archaea-type G1P-based membrane lipids found in Bacillales.</text>
</comment>
<comment type="catalytic activity">
    <reaction evidence="1">
        <text>sn-glycerol 1-phosphate + all-trans-heptaprenyl diphosphate = 3-heptaprenyl-sn-glycero-1-phosphate + diphosphate</text>
        <dbReference type="Rhea" id="RHEA:33495"/>
        <dbReference type="ChEBI" id="CHEBI:33019"/>
        <dbReference type="ChEBI" id="CHEBI:57685"/>
        <dbReference type="ChEBI" id="CHEBI:58206"/>
        <dbReference type="ChEBI" id="CHEBI:64781"/>
        <dbReference type="EC" id="2.5.1.n9"/>
    </reaction>
</comment>
<comment type="cofactor">
    <cofactor evidence="1">
        <name>Mg(2+)</name>
        <dbReference type="ChEBI" id="CHEBI:18420"/>
    </cofactor>
</comment>
<comment type="pathway">
    <text evidence="1">Membrane lipid metabolism; glycerophospholipid metabolism.</text>
</comment>
<comment type="subunit">
    <text evidence="1">Homodimer.</text>
</comment>
<comment type="similarity">
    <text evidence="1">Belongs to the GGGP/HepGP synthase family. Group I subfamily.</text>
</comment>
<feature type="chain" id="PRO_0000138714" description="Heptaprenylglyceryl phosphate synthase">
    <location>
        <begin position="1"/>
        <end position="225"/>
    </location>
</feature>
<feature type="binding site" evidence="1">
    <location>
        <position position="6"/>
    </location>
    <ligand>
        <name>sn-glycerol 1-phosphate</name>
        <dbReference type="ChEBI" id="CHEBI:57685"/>
    </ligand>
</feature>
<feature type="binding site" evidence="1">
    <location>
        <position position="8"/>
    </location>
    <ligand>
        <name>Mg(2+)</name>
        <dbReference type="ChEBI" id="CHEBI:18420"/>
    </ligand>
</feature>
<feature type="binding site" evidence="1">
    <location>
        <position position="34"/>
    </location>
    <ligand>
        <name>Mg(2+)</name>
        <dbReference type="ChEBI" id="CHEBI:18420"/>
    </ligand>
</feature>
<feature type="binding site" evidence="1">
    <location>
        <begin position="153"/>
        <end position="158"/>
    </location>
    <ligand>
        <name>sn-glycerol 1-phosphate</name>
        <dbReference type="ChEBI" id="CHEBI:57685"/>
    </ligand>
</feature>
<feature type="binding site" evidence="1">
    <location>
        <position position="183"/>
    </location>
    <ligand>
        <name>sn-glycerol 1-phosphate</name>
        <dbReference type="ChEBI" id="CHEBI:57685"/>
    </ligand>
</feature>
<feature type="binding site" evidence="1">
    <location>
        <begin position="203"/>
        <end position="204"/>
    </location>
    <ligand>
        <name>sn-glycerol 1-phosphate</name>
        <dbReference type="ChEBI" id="CHEBI:57685"/>
    </ligand>
</feature>
<accession>Q71YQ8</accession>
<gene>
    <name evidence="1" type="primary">pcrB</name>
    <name type="ordered locus">LMOf2365_1785</name>
</gene>
<dbReference type="EC" id="2.5.1.n9" evidence="1"/>
<dbReference type="EMBL" id="AE017262">
    <property type="protein sequence ID" value="AAT04556.1"/>
    <property type="molecule type" value="Genomic_DNA"/>
</dbReference>
<dbReference type="RefSeq" id="WP_003731566.1">
    <property type="nucleotide sequence ID" value="NC_002973.6"/>
</dbReference>
<dbReference type="SMR" id="Q71YQ8"/>
<dbReference type="KEGG" id="lmf:LMOf2365_1785"/>
<dbReference type="HOGENOM" id="CLU_095211_0_0_9"/>
<dbReference type="UniPathway" id="UPA00940"/>
<dbReference type="GO" id="GO:0120536">
    <property type="term" value="F:heptaprenylglyceryl phosphate synthase activity"/>
    <property type="evidence" value="ECO:0007669"/>
    <property type="project" value="RHEA"/>
</dbReference>
<dbReference type="GO" id="GO:0000287">
    <property type="term" value="F:magnesium ion binding"/>
    <property type="evidence" value="ECO:0007669"/>
    <property type="project" value="UniProtKB-UniRule"/>
</dbReference>
<dbReference type="GO" id="GO:0046474">
    <property type="term" value="P:glycerophospholipid biosynthetic process"/>
    <property type="evidence" value="ECO:0007669"/>
    <property type="project" value="UniProtKB-UniRule"/>
</dbReference>
<dbReference type="CDD" id="cd02812">
    <property type="entry name" value="PcrB_like"/>
    <property type="match status" value="1"/>
</dbReference>
<dbReference type="FunFam" id="3.20.20.390:FF:000001">
    <property type="entry name" value="Heptaprenylglyceryl phosphate synthase"/>
    <property type="match status" value="1"/>
</dbReference>
<dbReference type="Gene3D" id="3.20.20.390">
    <property type="entry name" value="FMN-linked oxidoreductases"/>
    <property type="match status" value="1"/>
</dbReference>
<dbReference type="HAMAP" id="MF_00112">
    <property type="entry name" value="GGGP_HepGP_synthase"/>
    <property type="match status" value="1"/>
</dbReference>
<dbReference type="InterPro" id="IPR039074">
    <property type="entry name" value="GGGP/HepGP_synthase_I"/>
</dbReference>
<dbReference type="InterPro" id="IPR038597">
    <property type="entry name" value="GGGP/HepGP_synthase_sf"/>
</dbReference>
<dbReference type="InterPro" id="IPR008205">
    <property type="entry name" value="GGGP_HepGP_synthase"/>
</dbReference>
<dbReference type="NCBIfam" id="TIGR01768">
    <property type="entry name" value="GGGP-family"/>
    <property type="match status" value="1"/>
</dbReference>
<dbReference type="NCBIfam" id="NF003199">
    <property type="entry name" value="PRK04169.1-3"/>
    <property type="match status" value="1"/>
</dbReference>
<dbReference type="PANTHER" id="PTHR40029">
    <property type="match status" value="1"/>
</dbReference>
<dbReference type="PANTHER" id="PTHR40029:SF2">
    <property type="entry name" value="HEPTAPRENYLGLYCERYL PHOSPHATE SYNTHASE"/>
    <property type="match status" value="1"/>
</dbReference>
<dbReference type="Pfam" id="PF01884">
    <property type="entry name" value="PcrB"/>
    <property type="match status" value="1"/>
</dbReference>
<dbReference type="SUPFAM" id="SSF51395">
    <property type="entry name" value="FMN-linked oxidoreductases"/>
    <property type="match status" value="1"/>
</dbReference>
<protein>
    <recommendedName>
        <fullName evidence="1">Heptaprenylglyceryl phosphate synthase</fullName>
        <shortName evidence="1">HepGP synthase</shortName>
        <ecNumber evidence="1">2.5.1.n9</ecNumber>
    </recommendedName>
    <alternativeName>
        <fullName evidence="1">Glycerol-1-phosphate heptaprenyltransferase</fullName>
    </alternativeName>
</protein>
<proteinExistence type="inferred from homology"/>
<name>PCRB_LISMF</name>
<evidence type="ECO:0000255" key="1">
    <source>
        <dbReference type="HAMAP-Rule" id="MF_00112"/>
    </source>
</evidence>
<keyword id="KW-0444">Lipid biosynthesis</keyword>
<keyword id="KW-0443">Lipid metabolism</keyword>
<keyword id="KW-0460">Magnesium</keyword>
<keyword id="KW-0479">Metal-binding</keyword>
<keyword id="KW-0594">Phospholipid biosynthesis</keyword>
<keyword id="KW-1208">Phospholipid metabolism</keyword>
<keyword id="KW-0808">Transferase</keyword>
<reference key="1">
    <citation type="journal article" date="2004" name="Nucleic Acids Res.">
        <title>Whole genome comparisons of serotype 4b and 1/2a strains of the food-borne pathogen Listeria monocytogenes reveal new insights into the core genome components of this species.</title>
        <authorList>
            <person name="Nelson K.E."/>
            <person name="Fouts D.E."/>
            <person name="Mongodin E.F."/>
            <person name="Ravel J."/>
            <person name="DeBoy R.T."/>
            <person name="Kolonay J.F."/>
            <person name="Rasko D.A."/>
            <person name="Angiuoli S.V."/>
            <person name="Gill S.R."/>
            <person name="Paulsen I.T."/>
            <person name="Peterson J.D."/>
            <person name="White O."/>
            <person name="Nelson W.C."/>
            <person name="Nierman W.C."/>
            <person name="Beanan M.J."/>
            <person name="Brinkac L.M."/>
            <person name="Daugherty S.C."/>
            <person name="Dodson R.J."/>
            <person name="Durkin A.S."/>
            <person name="Madupu R."/>
            <person name="Haft D.H."/>
            <person name="Selengut J."/>
            <person name="Van Aken S.E."/>
            <person name="Khouri H.M."/>
            <person name="Fedorova N."/>
            <person name="Forberger H.A."/>
            <person name="Tran B."/>
            <person name="Kathariou S."/>
            <person name="Wonderling L.D."/>
            <person name="Uhlich G.A."/>
            <person name="Bayles D.O."/>
            <person name="Luchansky J.B."/>
            <person name="Fraser C.M."/>
        </authorList>
    </citation>
    <scope>NUCLEOTIDE SEQUENCE [LARGE SCALE GENOMIC DNA]</scope>
    <source>
        <strain>F2365</strain>
    </source>
</reference>